<organism>
    <name type="scientific">Human herpesvirus 7 (strain JI)</name>
    <name type="common">HHV-7</name>
    <name type="synonym">Human T lymphotropic virus</name>
    <dbReference type="NCBI Taxonomy" id="57278"/>
    <lineage>
        <taxon>Viruses</taxon>
        <taxon>Duplodnaviria</taxon>
        <taxon>Heunggongvirae</taxon>
        <taxon>Peploviricota</taxon>
        <taxon>Herviviricetes</taxon>
        <taxon>Herpesvirales</taxon>
        <taxon>Orthoherpesviridae</taxon>
        <taxon>Betaherpesvirinae</taxon>
        <taxon>Roseolovirus</taxon>
        <taxon>Roseolovirus humanbeta7</taxon>
        <taxon>Human betaherpesvirus 7</taxon>
    </lineage>
</organism>
<proteinExistence type="inferred from homology"/>
<comment type="similarity">
    <text evidence="1">Belongs to the herpesviridae U4 family.</text>
</comment>
<evidence type="ECO:0000305" key="1"/>
<dbReference type="EMBL" id="U43400">
    <property type="protein sequence ID" value="AAC54668.1"/>
    <property type="molecule type" value="Genomic_DNA"/>
</dbReference>
<dbReference type="PIR" id="T41908">
    <property type="entry name" value="T41908"/>
</dbReference>
<dbReference type="RefSeq" id="YP_073748.1">
    <property type="nucleotide sequence ID" value="NC_001716.2"/>
</dbReference>
<dbReference type="DNASU" id="3289466"/>
<dbReference type="GeneID" id="3289466"/>
<dbReference type="KEGG" id="vg:3289466"/>
<dbReference type="Proteomes" id="UP000009246">
    <property type="component" value="Segment"/>
</dbReference>
<keyword id="KW-1185">Reference proteome</keyword>
<gene>
    <name type="primary">U4</name>
</gene>
<organismHost>
    <name type="scientific">Homo sapiens</name>
    <name type="common">Human</name>
    <dbReference type="NCBI Taxonomy" id="9606"/>
</organismHost>
<name>VU4_HHV7J</name>
<accession>P52521</accession>
<reference key="1">
    <citation type="journal article" date="1996" name="J. Virol.">
        <title>Determination and analysis of the complete nucleotide sequence of human herpesvirus.</title>
        <authorList>
            <person name="Nicholas J."/>
        </authorList>
    </citation>
    <scope>NUCLEOTIDE SEQUENCE [LARGE SCALE GENOMIC DNA]</scope>
</reference>
<protein>
    <recommendedName>
        <fullName>Protein U4</fullName>
    </recommendedName>
</protein>
<feature type="chain" id="PRO_0000116309" description="Protein U4">
    <location>
        <begin position="1"/>
        <end position="542"/>
    </location>
</feature>
<sequence>MDLIDYDVCKGPLRNRITYVIPNHPYLSWTAFNSCELDVNLNELTEEMIADSGHLTSEDLFQTRGLKFYDDSLLWAVLVEKNSVSFKRRDKATMTLDGFLAFLQSLRFEECTSPFYRVLTKATALAHFTIAEYFVAGEKRDTLSSHFNRLMELLDSLFLQFFMLRNRCDSNILLSLFELLPNPKEIAGEVVAPSNLLLKNFLDDKIFFSFVMNYHFVVSNLCSCGECRKALFSRFLKRRERGVLHLSDIQDFSPQDLILQQLHLTNDEALRVRESIDKDLGAELILKAMESKTLPILHDEILGNSHLERNILKIYCNIILCLFLARRVRERISRDLDKIARFFAQSLVFLEIRILPFEGVENVCRKLAVLGSHFSSHNVMSIPRHCSAFLEVASILVASYSKQNHRVRALLEHLCQKKVALTCSCFLLHLARELRHDILEGFTNPLKLHYMDNPVRFFRCQDCNLYGTHLWSGLFPNVVPHAVRGGGSFEVRIFEHRMRQRRVSVRKRLFKESQHRGFTIRQSRRIPRLAFCPFAKPVHKDY</sequence>